<proteinExistence type="inferred from homology"/>
<keyword id="KW-1185">Reference proteome</keyword>
<keyword id="KW-0687">Ribonucleoprotein</keyword>
<keyword id="KW-0689">Ribosomal protein</keyword>
<protein>
    <recommendedName>
        <fullName evidence="1">Large ribosomal subunit protein uL29</fullName>
    </recommendedName>
    <alternativeName>
        <fullName evidence="2">50S ribosomal protein L29</fullName>
    </alternativeName>
</protein>
<dbReference type="EMBL" id="CP000112">
    <property type="protein sequence ID" value="ABB39046.1"/>
    <property type="molecule type" value="Genomic_DNA"/>
</dbReference>
<dbReference type="RefSeq" id="WP_011368137.1">
    <property type="nucleotide sequence ID" value="NC_007519.1"/>
</dbReference>
<dbReference type="SMR" id="Q30Z50"/>
<dbReference type="STRING" id="207559.Dde_2249"/>
<dbReference type="KEGG" id="dde:Dde_2249"/>
<dbReference type="eggNOG" id="COG0255">
    <property type="taxonomic scope" value="Bacteria"/>
</dbReference>
<dbReference type="HOGENOM" id="CLU_158491_5_2_7"/>
<dbReference type="Proteomes" id="UP000002710">
    <property type="component" value="Chromosome"/>
</dbReference>
<dbReference type="GO" id="GO:0022625">
    <property type="term" value="C:cytosolic large ribosomal subunit"/>
    <property type="evidence" value="ECO:0007669"/>
    <property type="project" value="TreeGrafter"/>
</dbReference>
<dbReference type="GO" id="GO:0003735">
    <property type="term" value="F:structural constituent of ribosome"/>
    <property type="evidence" value="ECO:0007669"/>
    <property type="project" value="InterPro"/>
</dbReference>
<dbReference type="GO" id="GO:0006412">
    <property type="term" value="P:translation"/>
    <property type="evidence" value="ECO:0007669"/>
    <property type="project" value="UniProtKB-UniRule"/>
</dbReference>
<dbReference type="CDD" id="cd00427">
    <property type="entry name" value="Ribosomal_L29_HIP"/>
    <property type="match status" value="1"/>
</dbReference>
<dbReference type="FunFam" id="1.10.287.310:FF:000001">
    <property type="entry name" value="50S ribosomal protein L29"/>
    <property type="match status" value="1"/>
</dbReference>
<dbReference type="Gene3D" id="1.10.287.310">
    <property type="match status" value="1"/>
</dbReference>
<dbReference type="HAMAP" id="MF_00374">
    <property type="entry name" value="Ribosomal_uL29"/>
    <property type="match status" value="1"/>
</dbReference>
<dbReference type="InterPro" id="IPR050063">
    <property type="entry name" value="Ribosomal_protein_uL29"/>
</dbReference>
<dbReference type="InterPro" id="IPR001854">
    <property type="entry name" value="Ribosomal_uL29"/>
</dbReference>
<dbReference type="InterPro" id="IPR036049">
    <property type="entry name" value="Ribosomal_uL29_sf"/>
</dbReference>
<dbReference type="NCBIfam" id="TIGR00012">
    <property type="entry name" value="L29"/>
    <property type="match status" value="1"/>
</dbReference>
<dbReference type="PANTHER" id="PTHR10916">
    <property type="entry name" value="60S RIBOSOMAL PROTEIN L35/50S RIBOSOMAL PROTEIN L29"/>
    <property type="match status" value="1"/>
</dbReference>
<dbReference type="PANTHER" id="PTHR10916:SF0">
    <property type="entry name" value="LARGE RIBOSOMAL SUBUNIT PROTEIN UL29C"/>
    <property type="match status" value="1"/>
</dbReference>
<dbReference type="Pfam" id="PF00831">
    <property type="entry name" value="Ribosomal_L29"/>
    <property type="match status" value="1"/>
</dbReference>
<dbReference type="SUPFAM" id="SSF46561">
    <property type="entry name" value="Ribosomal protein L29 (L29p)"/>
    <property type="match status" value="1"/>
</dbReference>
<feature type="chain" id="PRO_1000007471" description="Large ribosomal subunit protein uL29">
    <location>
        <begin position="1"/>
        <end position="62"/>
    </location>
</feature>
<sequence length="62" mass="7042">MKAAELRKLSIDELKDKLAETRKELFDLRFKHATAQLEKTAEIPAAKHNVARILTILKEKGA</sequence>
<name>RL29_OLEA2</name>
<accession>Q30Z50</accession>
<comment type="similarity">
    <text evidence="1">Belongs to the universal ribosomal protein uL29 family.</text>
</comment>
<evidence type="ECO:0000255" key="1">
    <source>
        <dbReference type="HAMAP-Rule" id="MF_00374"/>
    </source>
</evidence>
<evidence type="ECO:0000305" key="2"/>
<reference key="1">
    <citation type="journal article" date="2011" name="J. Bacteriol.">
        <title>Complete genome sequence and updated annotation of Desulfovibrio alaskensis G20.</title>
        <authorList>
            <person name="Hauser L.J."/>
            <person name="Land M.L."/>
            <person name="Brown S.D."/>
            <person name="Larimer F."/>
            <person name="Keller K.L."/>
            <person name="Rapp-Giles B.J."/>
            <person name="Price M.N."/>
            <person name="Lin M."/>
            <person name="Bruce D.C."/>
            <person name="Detter J.C."/>
            <person name="Tapia R."/>
            <person name="Han C.S."/>
            <person name="Goodwin L.A."/>
            <person name="Cheng J.F."/>
            <person name="Pitluck S."/>
            <person name="Copeland A."/>
            <person name="Lucas S."/>
            <person name="Nolan M."/>
            <person name="Lapidus A.L."/>
            <person name="Palumbo A.V."/>
            <person name="Wall J.D."/>
        </authorList>
    </citation>
    <scope>NUCLEOTIDE SEQUENCE [LARGE SCALE GENOMIC DNA]</scope>
    <source>
        <strain>ATCC BAA-1058 / DSM 17464 / G20</strain>
    </source>
</reference>
<gene>
    <name evidence="1" type="primary">rpmC</name>
    <name type="ordered locus">Dde_2249</name>
</gene>
<organism>
    <name type="scientific">Oleidesulfovibrio alaskensis (strain ATCC BAA-1058 / DSM 17464 / G20)</name>
    <name type="common">Desulfovibrio alaskensis</name>
    <dbReference type="NCBI Taxonomy" id="207559"/>
    <lineage>
        <taxon>Bacteria</taxon>
        <taxon>Pseudomonadati</taxon>
        <taxon>Thermodesulfobacteriota</taxon>
        <taxon>Desulfovibrionia</taxon>
        <taxon>Desulfovibrionales</taxon>
        <taxon>Desulfovibrionaceae</taxon>
        <taxon>Oleidesulfovibrio</taxon>
    </lineage>
</organism>